<comment type="function">
    <text evidence="1 3">Envelope glycoprotein important for virion assembly and egress. Plays a role in the correct incorporation of gH-gL into virion membrane. Directs the glycoprotein N (gN) to the host trans-Golgi network.</text>
</comment>
<comment type="subunit">
    <text evidence="1 4">Interacts (via N-terminus) with gN (via N-terminus). The gM-gN heterodimer forms the gCII complex.</text>
</comment>
<comment type="subcellular location">
    <subcellularLocation>
        <location evidence="1">Virion membrane</location>
        <topology evidence="1">Multi-pass membrane protein</topology>
    </subcellularLocation>
    <subcellularLocation>
        <location evidence="1">Host Golgi apparatus</location>
        <location evidence="1">Host trans-Golgi network</location>
    </subcellularLocation>
    <subcellularLocation>
        <location evidence="1">Host endosome membrane</location>
        <topology evidence="1">Multi-pass membrane protein</topology>
    </subcellularLocation>
    <subcellularLocation>
        <location evidence="1">Host nucleus inner membrane</location>
        <topology evidence="1">Multi-pass membrane protein</topology>
    </subcellularLocation>
    <text evidence="1">During virion morphogenesis, this protein accumulates in the trans-Golgi network where secondary envelopment occurs.</text>
</comment>
<comment type="domain">
    <text>The highly charged and proline-rich cytoplasmic tail might interact with the virion tegument.</text>
</comment>
<comment type="similarity">
    <text evidence="1">Belongs to the herpesviridae glycoprotein M family.</text>
</comment>
<sequence>MKSSKNDTFVYRTWVKTLVVYFVMFVMSAVVPITAMFPNLGYPCYFNALVDYGALNLTNYNLAHHLTPTLYLEPPEMFVYITLVFIADCVAFIYYACGEVALIKARKKVSGLTDLSAWVSAVGSPTVLFLAILKLWSIQVFIQVLSYKHVFLSAFVYFLHFLASVLHACACVTRFSPVWVVKAQDNSIPQDTFLWWVVFYLKPVVTNLYLGCLALETLVFSLSVFLALGNSFYFMVGDMVLGAVNLFLILPIFWYILTEVWLASFLRHNFGFYCGMFIASIILILPLVRYEAVFVSAKLHTTVAINVAIIPILCSVAMLIRICRIFKSMRQGTDYVPVSETVELELESEPRPRPSRTPSPGRNRRRSSTSSSSSRSTRRQRPVSTQALVSSVLPMTTDSEEEIFP</sequence>
<organism>
    <name type="scientific">Epstein-Barr virus (strain B95-8)</name>
    <name type="common">HHV-4</name>
    <name type="synonym">Human herpesvirus 4</name>
    <dbReference type="NCBI Taxonomy" id="10377"/>
    <lineage>
        <taxon>Viruses</taxon>
        <taxon>Duplodnaviria</taxon>
        <taxon>Heunggongvirae</taxon>
        <taxon>Peploviricota</taxon>
        <taxon>Herviviricetes</taxon>
        <taxon>Herpesvirales</taxon>
        <taxon>Orthoherpesviridae</taxon>
        <taxon>Gammaherpesvirinae</taxon>
        <taxon>Lymphocryptovirus</taxon>
        <taxon>Lymphocryptovirus humangamma4</taxon>
        <taxon>Epstein-Barr virus (strain GD1)</taxon>
    </lineage>
</organism>
<reference key="1">
    <citation type="journal article" date="1984" name="Nature">
        <title>DNA sequence and expression of the B95-8 Epstein-Barr virus genome.</title>
        <authorList>
            <person name="Baer R."/>
            <person name="Bankier A.T."/>
            <person name="Biggin M.D."/>
            <person name="Deininger P.L."/>
            <person name="Farrell P.J."/>
            <person name="Gibson T.J."/>
            <person name="Hatfull G."/>
            <person name="Hudson G.S."/>
            <person name="Satchwell S.C."/>
            <person name="Seguin C."/>
            <person name="Tuffnell P.S."/>
            <person name="Barrell B.G."/>
        </authorList>
    </citation>
    <scope>NUCLEOTIDE SEQUENCE [LARGE SCALE GENOMIC DNA]</scope>
</reference>
<reference key="2">
    <citation type="journal article" date="2003" name="Virology">
        <title>Updated Epstein-Barr virus (EBV) DNA sequence and analysis of a promoter for the BART (CST, BARF0) RNAs of EBV.</title>
        <authorList>
            <person name="de Jesus O."/>
            <person name="Smith P.R."/>
            <person name="Spender L.C."/>
            <person name="Elgueta Karstegl C."/>
            <person name="Niller H.H."/>
            <person name="Huang D."/>
            <person name="Farrell P.J."/>
        </authorList>
    </citation>
    <scope>GENOME REANNOTATION</scope>
</reference>
<reference key="3">
    <citation type="journal article" date="1998" name="J. Virol.">
        <title>The Epstein-Barr virus (EBV) gN homolog BLRF1 encodes a 15-kilodalton glycoprotein that cannot be authentically processed unless it is coexpressed with the EBV gM homolog BBRF3.</title>
        <authorList>
            <person name="Lake C.M."/>
            <person name="Molesworth S.J."/>
            <person name="Hutt-Fletcher L.M."/>
        </authorList>
    </citation>
    <scope>INTERACTION WITH GN</scope>
</reference>
<reference key="4">
    <citation type="journal article" date="2000" name="J. Virol.">
        <title>Epstein-Barr virus that lacks glycoprotein gN is impaired in assembly and infection.</title>
        <authorList>
            <person name="Lake C.M."/>
            <person name="Hutt-Fletcher L.M."/>
        </authorList>
    </citation>
    <scope>FUNCTION</scope>
</reference>
<reference key="5">
    <citation type="journal article" date="2004" name="Proc. Natl. Acad. Sci. U.S.A.">
        <title>Proteins of purified Epstein-Barr virus.</title>
        <authorList>
            <person name="Johannsen E."/>
            <person name="Luftig M."/>
            <person name="Chase M.R."/>
            <person name="Weicksel S."/>
            <person name="Cahir-McFarland E."/>
            <person name="Illanes D."/>
            <person name="Sarracino D."/>
            <person name="Kieff E."/>
        </authorList>
    </citation>
    <scope>SUBCELLULAR LOCATION</scope>
</reference>
<organismHost>
    <name type="scientific">Homo sapiens</name>
    <name type="common">Human</name>
    <dbReference type="NCBI Taxonomy" id="9606"/>
</organismHost>
<name>GM_EBVB9</name>
<protein>
    <recommendedName>
        <fullName evidence="1">Envelope glycoprotein M</fullName>
        <shortName evidence="1">gM</shortName>
    </recommendedName>
</protein>
<dbReference type="EMBL" id="V01555">
    <property type="protein sequence ID" value="CAA24825.1"/>
    <property type="molecule type" value="Genomic_DNA"/>
</dbReference>
<dbReference type="EMBL" id="AJ507799">
    <property type="protein sequence ID" value="CAD53435.1"/>
    <property type="molecule type" value="Genomic_DNA"/>
</dbReference>
<dbReference type="PIR" id="G43043">
    <property type="entry name" value="QQBE35"/>
</dbReference>
<dbReference type="RefSeq" id="YP_401685.1">
    <property type="nucleotide sequence ID" value="NC_007605.1"/>
</dbReference>
<dbReference type="SMR" id="P03215"/>
<dbReference type="DNASU" id="3783687"/>
<dbReference type="GeneID" id="3783687"/>
<dbReference type="KEGG" id="vg:3783687"/>
<dbReference type="Proteomes" id="UP000153037">
    <property type="component" value="Segment"/>
</dbReference>
<dbReference type="GO" id="GO:0044175">
    <property type="term" value="C:host cell endosome membrane"/>
    <property type="evidence" value="ECO:0007669"/>
    <property type="project" value="UniProtKB-SubCell"/>
</dbReference>
<dbReference type="GO" id="GO:0044177">
    <property type="term" value="C:host cell Golgi apparatus"/>
    <property type="evidence" value="ECO:0007669"/>
    <property type="project" value="UniProtKB-SubCell"/>
</dbReference>
<dbReference type="GO" id="GO:0044201">
    <property type="term" value="C:host cell nuclear inner membrane"/>
    <property type="evidence" value="ECO:0007669"/>
    <property type="project" value="UniProtKB-SubCell"/>
</dbReference>
<dbReference type="GO" id="GO:0016020">
    <property type="term" value="C:membrane"/>
    <property type="evidence" value="ECO:0007669"/>
    <property type="project" value="UniProtKB-KW"/>
</dbReference>
<dbReference type="GO" id="GO:0019031">
    <property type="term" value="C:viral envelope"/>
    <property type="evidence" value="ECO:0007669"/>
    <property type="project" value="UniProtKB-KW"/>
</dbReference>
<dbReference type="GO" id="GO:0055036">
    <property type="term" value="C:virion membrane"/>
    <property type="evidence" value="ECO:0007669"/>
    <property type="project" value="UniProtKB-SubCell"/>
</dbReference>
<dbReference type="HAMAP" id="MF_04035">
    <property type="entry name" value="HSV_GM"/>
    <property type="match status" value="1"/>
</dbReference>
<dbReference type="InterPro" id="IPR000785">
    <property type="entry name" value="Herpes_glycop_M"/>
</dbReference>
<dbReference type="Pfam" id="PF01528">
    <property type="entry name" value="Herpes_glycop"/>
    <property type="match status" value="1"/>
</dbReference>
<dbReference type="PRINTS" id="PR00333">
    <property type="entry name" value="HSVINTEGRLMP"/>
</dbReference>
<proteinExistence type="evidence at protein level"/>
<gene>
    <name evidence="1" type="primary">gM</name>
    <name type="ORF">BBRF3</name>
</gene>
<accession>P03215</accession>
<accession>Q777D4</accession>
<feature type="chain" id="PRO_0000115783" description="Envelope glycoprotein M">
    <location>
        <begin position="1"/>
        <end position="405"/>
    </location>
</feature>
<feature type="topological domain" description="Intravirion" evidence="1">
    <location>
        <begin position="1"/>
        <end position="17"/>
    </location>
</feature>
<feature type="transmembrane region" description="Helical" evidence="1">
    <location>
        <begin position="18"/>
        <end position="38"/>
    </location>
</feature>
<feature type="topological domain" description="Virion surface" evidence="1">
    <location>
        <begin position="39"/>
        <end position="76"/>
    </location>
</feature>
<feature type="transmembrane region" description="Helical" evidence="1">
    <location>
        <begin position="77"/>
        <end position="97"/>
    </location>
</feature>
<feature type="topological domain" description="Intravirion" evidence="1">
    <location>
        <begin position="98"/>
        <end position="121"/>
    </location>
</feature>
<feature type="transmembrane region" description="Helical" evidence="1">
    <location>
        <begin position="122"/>
        <end position="142"/>
    </location>
</feature>
<feature type="topological domain" description="Virion surface" evidence="1">
    <location>
        <begin position="143"/>
        <end position="149"/>
    </location>
</feature>
<feature type="transmembrane region" description="Helical" evidence="1">
    <location>
        <begin position="150"/>
        <end position="170"/>
    </location>
</feature>
<feature type="topological domain" description="Intravirion" evidence="1">
    <location>
        <begin position="171"/>
        <end position="192"/>
    </location>
</feature>
<feature type="transmembrane region" description="Helical" evidence="1">
    <location>
        <begin position="193"/>
        <end position="215"/>
    </location>
</feature>
<feature type="topological domain" description="Virion surface" evidence="1">
    <location>
        <begin position="216"/>
        <end position="245"/>
    </location>
</feature>
<feature type="transmembrane region" description="Helical" evidence="1">
    <location>
        <begin position="246"/>
        <end position="266"/>
    </location>
</feature>
<feature type="topological domain" description="Intravirion" evidence="1">
    <location>
        <position position="267"/>
    </location>
</feature>
<feature type="transmembrane region" description="Helical" evidence="1">
    <location>
        <begin position="268"/>
        <end position="288"/>
    </location>
</feature>
<feature type="topological domain" description="Virion surface" evidence="1">
    <location>
        <begin position="289"/>
        <end position="299"/>
    </location>
</feature>
<feature type="transmembrane region" description="Helical" evidence="1">
    <location>
        <begin position="300"/>
        <end position="320"/>
    </location>
</feature>
<feature type="topological domain" description="Intravirion" evidence="1">
    <location>
        <begin position="321"/>
        <end position="405"/>
    </location>
</feature>
<feature type="region of interest" description="Disordered" evidence="2">
    <location>
        <begin position="346"/>
        <end position="405"/>
    </location>
</feature>
<feature type="compositionally biased region" description="Polar residues" evidence="2">
    <location>
        <begin position="386"/>
        <end position="397"/>
    </location>
</feature>
<feature type="disulfide bond" description="Interchain (with gN)" evidence="1">
    <location>
        <position position="44"/>
    </location>
</feature>
<evidence type="ECO:0000255" key="1">
    <source>
        <dbReference type="HAMAP-Rule" id="MF_04035"/>
    </source>
</evidence>
<evidence type="ECO:0000256" key="2">
    <source>
        <dbReference type="SAM" id="MobiDB-lite"/>
    </source>
</evidence>
<evidence type="ECO:0000269" key="3">
    <source>
    </source>
</evidence>
<evidence type="ECO:0000269" key="4">
    <source>
    </source>
</evidence>
<keyword id="KW-1015">Disulfide bond</keyword>
<keyword id="KW-0325">Glycoprotein</keyword>
<keyword id="KW-1039">Host endosome</keyword>
<keyword id="KW-1040">Host Golgi apparatus</keyword>
<keyword id="KW-1043">Host membrane</keyword>
<keyword id="KW-1048">Host nucleus</keyword>
<keyword id="KW-0472">Membrane</keyword>
<keyword id="KW-1185">Reference proteome</keyword>
<keyword id="KW-0812">Transmembrane</keyword>
<keyword id="KW-1133">Transmembrane helix</keyword>
<keyword id="KW-0261">Viral envelope protein</keyword>
<keyword id="KW-0946">Virion</keyword>